<evidence type="ECO:0000255" key="1">
    <source>
        <dbReference type="HAMAP-Rule" id="MF_01351"/>
    </source>
</evidence>
<name>NDHI_MAIZE</name>
<organism>
    <name type="scientific">Zea mays</name>
    <name type="common">Maize</name>
    <dbReference type="NCBI Taxonomy" id="4577"/>
    <lineage>
        <taxon>Eukaryota</taxon>
        <taxon>Viridiplantae</taxon>
        <taxon>Streptophyta</taxon>
        <taxon>Embryophyta</taxon>
        <taxon>Tracheophyta</taxon>
        <taxon>Spermatophyta</taxon>
        <taxon>Magnoliopsida</taxon>
        <taxon>Liliopsida</taxon>
        <taxon>Poales</taxon>
        <taxon>Poaceae</taxon>
        <taxon>PACMAD clade</taxon>
        <taxon>Panicoideae</taxon>
        <taxon>Andropogonodae</taxon>
        <taxon>Andropogoneae</taxon>
        <taxon>Tripsacinae</taxon>
        <taxon>Zea</taxon>
    </lineage>
</organism>
<gene>
    <name evidence="1" type="primary">ndhI</name>
    <name type="synonym">frxB</name>
</gene>
<proteinExistence type="inferred from homology"/>
<sequence>MFPMLTGFISYGQQTIRAARYIGQSFIITLSHTNRLPITIHYPYEKSITSERFRGRIHFEFDKCIACEVCVRVCPIDLPLVDWRFEKDIKRKQLLNYSIDFGVCIFCGNCVEYCPTNCLSMTEEYELSTYDRHELNYNQIALSRLPISIMGDYTIQTIRNSPQSKIDEEKSWNSRTITDY</sequence>
<accession>P46722</accession>
<feature type="chain" id="PRO_0000118706" description="NAD(P)H-quinone oxidoreductase subunit I, chloroplastic">
    <location>
        <begin position="1"/>
        <end position="180"/>
    </location>
</feature>
<feature type="domain" description="4Fe-4S ferredoxin-type 1" evidence="1">
    <location>
        <begin position="55"/>
        <end position="84"/>
    </location>
</feature>
<feature type="domain" description="4Fe-4S ferredoxin-type 2" evidence="1">
    <location>
        <begin position="95"/>
        <end position="124"/>
    </location>
</feature>
<feature type="binding site" evidence="1">
    <location>
        <position position="64"/>
    </location>
    <ligand>
        <name>[4Fe-4S] cluster</name>
        <dbReference type="ChEBI" id="CHEBI:49883"/>
        <label>1</label>
    </ligand>
</feature>
<feature type="binding site" evidence="1">
    <location>
        <position position="67"/>
    </location>
    <ligand>
        <name>[4Fe-4S] cluster</name>
        <dbReference type="ChEBI" id="CHEBI:49883"/>
        <label>1</label>
    </ligand>
</feature>
<feature type="binding site" evidence="1">
    <location>
        <position position="70"/>
    </location>
    <ligand>
        <name>[4Fe-4S] cluster</name>
        <dbReference type="ChEBI" id="CHEBI:49883"/>
        <label>1</label>
    </ligand>
</feature>
<feature type="binding site" evidence="1">
    <location>
        <position position="74"/>
    </location>
    <ligand>
        <name>[4Fe-4S] cluster</name>
        <dbReference type="ChEBI" id="CHEBI:49883"/>
        <label>2</label>
    </ligand>
</feature>
<feature type="binding site" evidence="1">
    <location>
        <position position="104"/>
    </location>
    <ligand>
        <name>[4Fe-4S] cluster</name>
        <dbReference type="ChEBI" id="CHEBI:49883"/>
        <label>2</label>
    </ligand>
</feature>
<feature type="binding site" evidence="1">
    <location>
        <position position="107"/>
    </location>
    <ligand>
        <name>[4Fe-4S] cluster</name>
        <dbReference type="ChEBI" id="CHEBI:49883"/>
        <label>2</label>
    </ligand>
</feature>
<feature type="binding site" evidence="1">
    <location>
        <position position="110"/>
    </location>
    <ligand>
        <name>[4Fe-4S] cluster</name>
        <dbReference type="ChEBI" id="CHEBI:49883"/>
        <label>2</label>
    </ligand>
</feature>
<feature type="binding site" evidence="1">
    <location>
        <position position="114"/>
    </location>
    <ligand>
        <name>[4Fe-4S] cluster</name>
        <dbReference type="ChEBI" id="CHEBI:49883"/>
        <label>1</label>
    </ligand>
</feature>
<dbReference type="EC" id="7.1.1.-" evidence="1"/>
<dbReference type="EMBL" id="X86563">
    <property type="protein sequence ID" value="CAA60352.1"/>
    <property type="molecule type" value="Genomic_DNA"/>
</dbReference>
<dbReference type="PIR" id="S58619">
    <property type="entry name" value="S58619"/>
</dbReference>
<dbReference type="RefSeq" id="NP_043091.1">
    <property type="nucleotide sequence ID" value="NC_001666.2"/>
</dbReference>
<dbReference type="SMR" id="P46722"/>
<dbReference type="FunCoup" id="P46722">
    <property type="interactions" value="206"/>
</dbReference>
<dbReference type="STRING" id="4577.P46722"/>
<dbReference type="PaxDb" id="4577-GRMZM5G866223_P01"/>
<dbReference type="GeneID" id="845188"/>
<dbReference type="KEGG" id="zma:845188"/>
<dbReference type="MaizeGDB" id="69252"/>
<dbReference type="eggNOG" id="KOG3256">
    <property type="taxonomic scope" value="Eukaryota"/>
</dbReference>
<dbReference type="HOGENOM" id="CLU_122804_0_0_1"/>
<dbReference type="InParanoid" id="P46722"/>
<dbReference type="OMA" id="WRPVIDY"/>
<dbReference type="OrthoDB" id="590178at2759"/>
<dbReference type="Proteomes" id="UP000007305">
    <property type="component" value="Chloroplast"/>
</dbReference>
<dbReference type="GO" id="GO:0009535">
    <property type="term" value="C:chloroplast thylakoid membrane"/>
    <property type="evidence" value="ECO:0007669"/>
    <property type="project" value="UniProtKB-SubCell"/>
</dbReference>
<dbReference type="GO" id="GO:0051539">
    <property type="term" value="F:4 iron, 4 sulfur cluster binding"/>
    <property type="evidence" value="ECO:0007669"/>
    <property type="project" value="UniProtKB-KW"/>
</dbReference>
<dbReference type="GO" id="GO:0005506">
    <property type="term" value="F:iron ion binding"/>
    <property type="evidence" value="ECO:0007669"/>
    <property type="project" value="UniProtKB-UniRule"/>
</dbReference>
<dbReference type="GO" id="GO:0008137">
    <property type="term" value="F:NADH dehydrogenase (ubiquinone) activity"/>
    <property type="evidence" value="ECO:0007669"/>
    <property type="project" value="InterPro"/>
</dbReference>
<dbReference type="GO" id="GO:0048038">
    <property type="term" value="F:quinone binding"/>
    <property type="evidence" value="ECO:0007669"/>
    <property type="project" value="UniProtKB-KW"/>
</dbReference>
<dbReference type="GO" id="GO:0019684">
    <property type="term" value="P:photosynthesis, light reaction"/>
    <property type="evidence" value="ECO:0007669"/>
    <property type="project" value="UniProtKB-UniRule"/>
</dbReference>
<dbReference type="Gene3D" id="3.30.70.3270">
    <property type="match status" value="1"/>
</dbReference>
<dbReference type="HAMAP" id="MF_01351">
    <property type="entry name" value="NDH1_NuoI"/>
    <property type="match status" value="1"/>
</dbReference>
<dbReference type="InterPro" id="IPR017896">
    <property type="entry name" value="4Fe4S_Fe-S-bd"/>
</dbReference>
<dbReference type="InterPro" id="IPR017900">
    <property type="entry name" value="4Fe4S_Fe_S_CS"/>
</dbReference>
<dbReference type="InterPro" id="IPR010226">
    <property type="entry name" value="NADH_quinone_OxRdtase_chainI"/>
</dbReference>
<dbReference type="InterPro" id="IPR004497">
    <property type="entry name" value="NDHI"/>
</dbReference>
<dbReference type="NCBIfam" id="TIGR00403">
    <property type="entry name" value="ndhI"/>
    <property type="match status" value="1"/>
</dbReference>
<dbReference type="NCBIfam" id="TIGR01971">
    <property type="entry name" value="NuoI"/>
    <property type="match status" value="1"/>
</dbReference>
<dbReference type="NCBIfam" id="NF004537">
    <property type="entry name" value="PRK05888.1-3"/>
    <property type="match status" value="1"/>
</dbReference>
<dbReference type="PANTHER" id="PTHR47275">
    <property type="entry name" value="NAD(P)H-QUINONE OXIDOREDUCTASE SUBUNIT I, CHLOROPLASTIC"/>
    <property type="match status" value="1"/>
</dbReference>
<dbReference type="PANTHER" id="PTHR47275:SF3">
    <property type="entry name" value="NAD(P)H-QUINONE OXIDOREDUCTASE SUBUNIT I, CHLOROPLASTIC"/>
    <property type="match status" value="1"/>
</dbReference>
<dbReference type="Pfam" id="PF13237">
    <property type="entry name" value="Fer4_10"/>
    <property type="match status" value="1"/>
</dbReference>
<dbReference type="SUPFAM" id="SSF54862">
    <property type="entry name" value="4Fe-4S ferredoxins"/>
    <property type="match status" value="1"/>
</dbReference>
<dbReference type="PROSITE" id="PS00198">
    <property type="entry name" value="4FE4S_FER_1"/>
    <property type="match status" value="2"/>
</dbReference>
<dbReference type="PROSITE" id="PS51379">
    <property type="entry name" value="4FE4S_FER_2"/>
    <property type="match status" value="2"/>
</dbReference>
<protein>
    <recommendedName>
        <fullName evidence="1">NAD(P)H-quinone oxidoreductase subunit I, chloroplastic</fullName>
        <ecNumber evidence="1">7.1.1.-</ecNumber>
    </recommendedName>
    <alternativeName>
        <fullName evidence="1">NAD(P)H dehydrogenase subunit I</fullName>
        <shortName evidence="1">NDH subunit I</shortName>
    </alternativeName>
    <alternativeName>
        <fullName evidence="1">NADH-plastoquinone oxidoreductase subunit I</fullName>
    </alternativeName>
</protein>
<keyword id="KW-0004">4Fe-4S</keyword>
<keyword id="KW-0150">Chloroplast</keyword>
<keyword id="KW-0408">Iron</keyword>
<keyword id="KW-0411">Iron-sulfur</keyword>
<keyword id="KW-0472">Membrane</keyword>
<keyword id="KW-0479">Metal-binding</keyword>
<keyword id="KW-0520">NAD</keyword>
<keyword id="KW-0521">NADP</keyword>
<keyword id="KW-0934">Plastid</keyword>
<keyword id="KW-0618">Plastoquinone</keyword>
<keyword id="KW-0874">Quinone</keyword>
<keyword id="KW-1185">Reference proteome</keyword>
<keyword id="KW-0677">Repeat</keyword>
<keyword id="KW-0793">Thylakoid</keyword>
<keyword id="KW-1278">Translocase</keyword>
<comment type="function">
    <text evidence="1">NDH shuttles electrons from NAD(P)H:plastoquinone, via FMN and iron-sulfur (Fe-S) centers, to quinones in the photosynthetic chain and possibly in a chloroplast respiratory chain. The immediate electron acceptor for the enzyme in this species is believed to be plastoquinone. Couples the redox reaction to proton translocation, and thus conserves the redox energy in a proton gradient.</text>
</comment>
<comment type="catalytic activity">
    <reaction evidence="1">
        <text>a plastoquinone + NADH + (n+1) H(+)(in) = a plastoquinol + NAD(+) + n H(+)(out)</text>
        <dbReference type="Rhea" id="RHEA:42608"/>
        <dbReference type="Rhea" id="RHEA-COMP:9561"/>
        <dbReference type="Rhea" id="RHEA-COMP:9562"/>
        <dbReference type="ChEBI" id="CHEBI:15378"/>
        <dbReference type="ChEBI" id="CHEBI:17757"/>
        <dbReference type="ChEBI" id="CHEBI:57540"/>
        <dbReference type="ChEBI" id="CHEBI:57945"/>
        <dbReference type="ChEBI" id="CHEBI:62192"/>
    </reaction>
</comment>
<comment type="catalytic activity">
    <reaction evidence="1">
        <text>a plastoquinone + NADPH + (n+1) H(+)(in) = a plastoquinol + NADP(+) + n H(+)(out)</text>
        <dbReference type="Rhea" id="RHEA:42612"/>
        <dbReference type="Rhea" id="RHEA-COMP:9561"/>
        <dbReference type="Rhea" id="RHEA-COMP:9562"/>
        <dbReference type="ChEBI" id="CHEBI:15378"/>
        <dbReference type="ChEBI" id="CHEBI:17757"/>
        <dbReference type="ChEBI" id="CHEBI:57783"/>
        <dbReference type="ChEBI" id="CHEBI:58349"/>
        <dbReference type="ChEBI" id="CHEBI:62192"/>
    </reaction>
</comment>
<comment type="cofactor">
    <cofactor evidence="1">
        <name>[4Fe-4S] cluster</name>
        <dbReference type="ChEBI" id="CHEBI:49883"/>
    </cofactor>
    <text evidence="1">Binds 2 [4Fe-4S] clusters per subunit.</text>
</comment>
<comment type="subunit">
    <text evidence="1">NDH is composed of at least 16 different subunits, 5 of which are encoded in the nucleus.</text>
</comment>
<comment type="subcellular location">
    <subcellularLocation>
        <location evidence="1">Plastid</location>
        <location evidence="1">Chloroplast thylakoid membrane</location>
        <topology evidence="1">Peripheral membrane protein</topology>
    </subcellularLocation>
</comment>
<comment type="similarity">
    <text evidence="1">Belongs to the complex I 23 kDa subunit family.</text>
</comment>
<geneLocation type="chloroplast"/>
<reference key="1">
    <citation type="journal article" date="1995" name="J. Mol. Biol.">
        <title>Complete sequence of the maize chloroplast genome: gene content, hotspots of divergence and fine tuning of genetic information by transcript editing.</title>
        <authorList>
            <person name="Maier R.M."/>
            <person name="Neckermann K."/>
            <person name="Igloi G.L."/>
            <person name="Koessel H."/>
        </authorList>
    </citation>
    <scope>NUCLEOTIDE SEQUENCE [LARGE SCALE GENOMIC DNA]</scope>
    <source>
        <strain>cv. B73</strain>
    </source>
</reference>